<accession>O93743</accession>
<protein>
    <recommendedName>
        <fullName>Sensory rhodopsin</fullName>
        <shortName>SR</shortName>
    </recommendedName>
</protein>
<sequence>MTGAVTSAYWLAAVAFLIGVGITAALYAKLEGSRARTRLAALAVIPGFAGLSYVGMALGIGTVTVNGAELVGLRYVDWVVTTPLLVGFIGYNAGASRRAIAGVMIADALMIVFGAAAVVSGGTLKWALFGVSALFHVSLFAYLYVIFPGGIPDDPMQRGLFSLLKNHVGLLWLAYPFVWLMGPAGIGFTGAVGAALTYAFLDVLAKVPYVYFFYARRQAFIDVTDSRAAAKGDGPAVGGEAPVATGDDAPTAAD</sequence>
<comment type="function">
    <text evidence="1">Involved in the control of phototaxis.</text>
</comment>
<comment type="subcellular location">
    <subcellularLocation>
        <location>Cell membrane</location>
        <topology>Multi-pass membrane protein</topology>
    </subcellularLocation>
</comment>
<comment type="similarity">
    <text evidence="3">Belongs to the archaeal/bacterial/fungal opsin family.</text>
</comment>
<organism>
    <name type="scientific">Halorubrum sodomense</name>
    <dbReference type="NCBI Taxonomy" id="35743"/>
    <lineage>
        <taxon>Archaea</taxon>
        <taxon>Methanobacteriati</taxon>
        <taxon>Methanobacteriota</taxon>
        <taxon>Stenosarchaea group</taxon>
        <taxon>Halobacteria</taxon>
        <taxon>Halobacteriales</taxon>
        <taxon>Haloferacaceae</taxon>
        <taxon>Halorubrum</taxon>
    </lineage>
</organism>
<gene>
    <name type="primary">sop</name>
</gene>
<evidence type="ECO:0000250" key="1"/>
<evidence type="ECO:0000256" key="2">
    <source>
        <dbReference type="SAM" id="MobiDB-lite"/>
    </source>
</evidence>
<evidence type="ECO:0000305" key="3"/>
<dbReference type="EMBL" id="AB009623">
    <property type="protein sequence ID" value="BAA75203.1"/>
    <property type="molecule type" value="Genomic_DNA"/>
</dbReference>
<dbReference type="PIR" id="T43843">
    <property type="entry name" value="T43843"/>
</dbReference>
<dbReference type="SMR" id="O93743"/>
<dbReference type="STRING" id="35743.SAMN04487937_1712"/>
<dbReference type="GO" id="GO:0005886">
    <property type="term" value="C:plasma membrane"/>
    <property type="evidence" value="ECO:0007669"/>
    <property type="project" value="UniProtKB-SubCell"/>
</dbReference>
<dbReference type="GO" id="GO:0005216">
    <property type="term" value="F:monoatomic ion channel activity"/>
    <property type="evidence" value="ECO:0007669"/>
    <property type="project" value="InterPro"/>
</dbReference>
<dbReference type="GO" id="GO:0009881">
    <property type="term" value="F:photoreceptor activity"/>
    <property type="evidence" value="ECO:0007669"/>
    <property type="project" value="UniProtKB-KW"/>
</dbReference>
<dbReference type="GO" id="GO:0007602">
    <property type="term" value="P:phototransduction"/>
    <property type="evidence" value="ECO:0007669"/>
    <property type="project" value="UniProtKB-KW"/>
</dbReference>
<dbReference type="CDD" id="cd15029">
    <property type="entry name" value="7tm_SRI_SRII"/>
    <property type="match status" value="1"/>
</dbReference>
<dbReference type="Gene3D" id="1.20.1070.10">
    <property type="entry name" value="Rhodopsin 7-helix transmembrane proteins"/>
    <property type="match status" value="1"/>
</dbReference>
<dbReference type="InterPro" id="IPR001425">
    <property type="entry name" value="Arc/bac/fun_rhodopsins"/>
</dbReference>
<dbReference type="InterPro" id="IPR018229">
    <property type="entry name" value="Rhodopsin_retinal_BS"/>
</dbReference>
<dbReference type="PANTHER" id="PTHR28286">
    <property type="match status" value="1"/>
</dbReference>
<dbReference type="PANTHER" id="PTHR28286:SF2">
    <property type="entry name" value="BACTERIORHODOPSIN _OPSIN, NOPA (EUROFUNG)"/>
    <property type="match status" value="1"/>
</dbReference>
<dbReference type="Pfam" id="PF01036">
    <property type="entry name" value="Bac_rhodopsin"/>
    <property type="match status" value="1"/>
</dbReference>
<dbReference type="PRINTS" id="PR00251">
    <property type="entry name" value="BACTRLOPSIN"/>
</dbReference>
<dbReference type="SMART" id="SM01021">
    <property type="entry name" value="Bac_rhodopsin"/>
    <property type="match status" value="1"/>
</dbReference>
<dbReference type="SUPFAM" id="SSF81321">
    <property type="entry name" value="Family A G protein-coupled receptor-like"/>
    <property type="match status" value="1"/>
</dbReference>
<dbReference type="PROSITE" id="PS00950">
    <property type="entry name" value="BACTERIAL_OPSIN_1"/>
    <property type="match status" value="1"/>
</dbReference>
<dbReference type="PROSITE" id="PS00327">
    <property type="entry name" value="BACTERIAL_OPSIN_RET"/>
    <property type="match status" value="1"/>
</dbReference>
<reference key="1">
    <citation type="journal article" date="1999" name="J. Mol. Biol.">
        <title>Evolution of the archaeal rhodopsins: evolution rate changes by gene duplication and functional differentiation.</title>
        <authorList>
            <person name="Ihara K."/>
            <person name="Umemura T."/>
            <person name="Katagiri I."/>
            <person name="Kitajima-Ihara T."/>
            <person name="Sugiyama Y."/>
            <person name="Kimura Y."/>
            <person name="Mukohata Y."/>
        </authorList>
    </citation>
    <scope>NUCLEOTIDE SEQUENCE [GENOMIC DNA]</scope>
</reference>
<proteinExistence type="evidence at protein level"/>
<feature type="chain" id="PRO_0000196278" description="Sensory rhodopsin">
    <location>
        <begin position="1"/>
        <end position="254"/>
    </location>
</feature>
<feature type="topological domain" description="Extracellular" evidence="1">
    <location>
        <begin position="1"/>
        <end position="4"/>
    </location>
</feature>
<feature type="transmembrane region" description="Helical; Name=Helix A" evidence="1">
    <location>
        <begin position="5"/>
        <end position="26"/>
    </location>
</feature>
<feature type="topological domain" description="Cytoplasmic" evidence="1">
    <location>
        <begin position="27"/>
        <end position="35"/>
    </location>
</feature>
<feature type="transmembrane region" description="Helical; Name=Helix B" evidence="1">
    <location>
        <begin position="36"/>
        <end position="57"/>
    </location>
</feature>
<feature type="topological domain" description="Extracellular" evidence="1">
    <location>
        <begin position="58"/>
        <end position="71"/>
    </location>
</feature>
<feature type="transmembrane region" description="Helical; Name=Helix C" evidence="1">
    <location>
        <begin position="72"/>
        <end position="93"/>
    </location>
</feature>
<feature type="topological domain" description="Cytoplasmic" evidence="1">
    <location>
        <begin position="94"/>
        <end position="96"/>
    </location>
</feature>
<feature type="transmembrane region" description="Helical; Name=Helix D" evidence="1">
    <location>
        <begin position="97"/>
        <end position="119"/>
    </location>
</feature>
<feature type="topological domain" description="Extracellular" evidence="1">
    <location>
        <begin position="120"/>
        <end position="123"/>
    </location>
</feature>
<feature type="transmembrane region" description="Helical; Name=Helix E" evidence="1">
    <location>
        <begin position="124"/>
        <end position="151"/>
    </location>
</feature>
<feature type="topological domain" description="Cytoplasmic" evidence="1">
    <location>
        <begin position="152"/>
        <end position="154"/>
    </location>
</feature>
<feature type="transmembrane region" description="Helical; Name=Helix F" evidence="1">
    <location>
        <begin position="155"/>
        <end position="182"/>
    </location>
</feature>
<feature type="topological domain" description="Extracellular" evidence="1">
    <location>
        <begin position="183"/>
        <end position="190"/>
    </location>
</feature>
<feature type="transmembrane region" description="Helical; Name=Helix G" evidence="1">
    <location>
        <begin position="191"/>
        <end position="223"/>
    </location>
</feature>
<feature type="topological domain" description="Cytoplasmic" evidence="1">
    <location>
        <begin position="224"/>
        <end position="254"/>
    </location>
</feature>
<feature type="region of interest" description="Disordered" evidence="2">
    <location>
        <begin position="231"/>
        <end position="254"/>
    </location>
</feature>
<feature type="modified residue" description="N6-(retinylidene)lysine">
    <location>
        <position position="206"/>
    </location>
</feature>
<name>BACS_HALSD</name>
<keyword id="KW-1003">Cell membrane</keyword>
<keyword id="KW-0157">Chromophore</keyword>
<keyword id="KW-0472">Membrane</keyword>
<keyword id="KW-0600">Photoreceptor protein</keyword>
<keyword id="KW-0675">Receptor</keyword>
<keyword id="KW-0681">Retinal protein</keyword>
<keyword id="KW-0716">Sensory transduction</keyword>
<keyword id="KW-0812">Transmembrane</keyword>
<keyword id="KW-1133">Transmembrane helix</keyword>